<dbReference type="EC" id="2.7.7.38" evidence="1"/>
<dbReference type="EMBL" id="CP000021">
    <property type="protein sequence ID" value="AAW87497.1"/>
    <property type="molecule type" value="Genomic_DNA"/>
</dbReference>
<dbReference type="RefSeq" id="WP_005422541.1">
    <property type="nucleotide sequence ID" value="NZ_CAWLES010000002.1"/>
</dbReference>
<dbReference type="RefSeq" id="YP_206385.1">
    <property type="nucleotide sequence ID" value="NC_006841.2"/>
</dbReference>
<dbReference type="SMR" id="Q5E0E9"/>
<dbReference type="STRING" id="312309.VF_A0427"/>
<dbReference type="EnsemblBacteria" id="AAW87497">
    <property type="protein sequence ID" value="AAW87497"/>
    <property type="gene ID" value="VF_A0427"/>
</dbReference>
<dbReference type="GeneID" id="54165753"/>
<dbReference type="KEGG" id="vfi:VF_A0427"/>
<dbReference type="PATRIC" id="fig|312309.11.peg.3032"/>
<dbReference type="eggNOG" id="COG1212">
    <property type="taxonomic scope" value="Bacteria"/>
</dbReference>
<dbReference type="HOGENOM" id="CLU_065038_1_0_6"/>
<dbReference type="OrthoDB" id="9815559at2"/>
<dbReference type="UniPathway" id="UPA00030"/>
<dbReference type="UniPathway" id="UPA00358">
    <property type="reaction ID" value="UER00476"/>
</dbReference>
<dbReference type="Proteomes" id="UP000000537">
    <property type="component" value="Chromosome II"/>
</dbReference>
<dbReference type="GO" id="GO:0005829">
    <property type="term" value="C:cytosol"/>
    <property type="evidence" value="ECO:0007669"/>
    <property type="project" value="TreeGrafter"/>
</dbReference>
<dbReference type="GO" id="GO:0008690">
    <property type="term" value="F:3-deoxy-manno-octulosonate cytidylyltransferase activity"/>
    <property type="evidence" value="ECO:0007669"/>
    <property type="project" value="UniProtKB-UniRule"/>
</dbReference>
<dbReference type="GO" id="GO:0033468">
    <property type="term" value="P:CMP-keto-3-deoxy-D-manno-octulosonic acid biosynthetic process"/>
    <property type="evidence" value="ECO:0007669"/>
    <property type="project" value="UniProtKB-UniRule"/>
</dbReference>
<dbReference type="GO" id="GO:0009103">
    <property type="term" value="P:lipopolysaccharide biosynthetic process"/>
    <property type="evidence" value="ECO:0007669"/>
    <property type="project" value="UniProtKB-UniRule"/>
</dbReference>
<dbReference type="CDD" id="cd02517">
    <property type="entry name" value="CMP-KDO-Synthetase"/>
    <property type="match status" value="1"/>
</dbReference>
<dbReference type="FunFam" id="3.90.550.10:FF:000011">
    <property type="entry name" value="3-deoxy-manno-octulosonate cytidylyltransferase"/>
    <property type="match status" value="1"/>
</dbReference>
<dbReference type="Gene3D" id="3.90.550.10">
    <property type="entry name" value="Spore Coat Polysaccharide Biosynthesis Protein SpsA, Chain A"/>
    <property type="match status" value="1"/>
</dbReference>
<dbReference type="HAMAP" id="MF_00057">
    <property type="entry name" value="KdsB"/>
    <property type="match status" value="1"/>
</dbReference>
<dbReference type="InterPro" id="IPR003329">
    <property type="entry name" value="Cytidylyl_trans"/>
</dbReference>
<dbReference type="InterPro" id="IPR004528">
    <property type="entry name" value="KdsB"/>
</dbReference>
<dbReference type="InterPro" id="IPR029044">
    <property type="entry name" value="Nucleotide-diphossugar_trans"/>
</dbReference>
<dbReference type="NCBIfam" id="TIGR00466">
    <property type="entry name" value="kdsB"/>
    <property type="match status" value="1"/>
</dbReference>
<dbReference type="NCBIfam" id="NF003950">
    <property type="entry name" value="PRK05450.1-3"/>
    <property type="match status" value="1"/>
</dbReference>
<dbReference type="NCBIfam" id="NF003952">
    <property type="entry name" value="PRK05450.1-5"/>
    <property type="match status" value="1"/>
</dbReference>
<dbReference type="NCBIfam" id="NF009905">
    <property type="entry name" value="PRK13368.1"/>
    <property type="match status" value="1"/>
</dbReference>
<dbReference type="PANTHER" id="PTHR42866">
    <property type="entry name" value="3-DEOXY-MANNO-OCTULOSONATE CYTIDYLYLTRANSFERASE"/>
    <property type="match status" value="1"/>
</dbReference>
<dbReference type="PANTHER" id="PTHR42866:SF2">
    <property type="entry name" value="3-DEOXY-MANNO-OCTULOSONATE CYTIDYLYLTRANSFERASE, MITOCHONDRIAL"/>
    <property type="match status" value="1"/>
</dbReference>
<dbReference type="Pfam" id="PF02348">
    <property type="entry name" value="CTP_transf_3"/>
    <property type="match status" value="1"/>
</dbReference>
<dbReference type="SUPFAM" id="SSF53448">
    <property type="entry name" value="Nucleotide-diphospho-sugar transferases"/>
    <property type="match status" value="1"/>
</dbReference>
<gene>
    <name evidence="1" type="primary">kdsB</name>
    <name type="ordered locus">VF_A0427</name>
</gene>
<sequence>MSFTVIIPARYQSTRLPGKPLADICGKPMIQWVYEQASKAGADRVIIATDDSRIEAVVKGFGGDVCMTSPNHESGTERLAEVIEKCGISADEIVVNVQGDEPLIPPSIIQQVAQNLSDSVAPMATLAVTIDEEDDVFNPNAVKVVTDAEGYALYFSRASIPWDRDAFAQGETLTANPLLRHIGIYAYRAGFINTYINWQPSVLEKIECLEQLRVLWYGEKIHVAVAKEAPAAGVDTPEDLEKVRAILSK</sequence>
<evidence type="ECO:0000255" key="1">
    <source>
        <dbReference type="HAMAP-Rule" id="MF_00057"/>
    </source>
</evidence>
<organism>
    <name type="scientific">Aliivibrio fischeri (strain ATCC 700601 / ES114)</name>
    <name type="common">Vibrio fischeri</name>
    <dbReference type="NCBI Taxonomy" id="312309"/>
    <lineage>
        <taxon>Bacteria</taxon>
        <taxon>Pseudomonadati</taxon>
        <taxon>Pseudomonadota</taxon>
        <taxon>Gammaproteobacteria</taxon>
        <taxon>Vibrionales</taxon>
        <taxon>Vibrionaceae</taxon>
        <taxon>Aliivibrio</taxon>
    </lineage>
</organism>
<reference key="1">
    <citation type="journal article" date="2005" name="Proc. Natl. Acad. Sci. U.S.A.">
        <title>Complete genome sequence of Vibrio fischeri: a symbiotic bacterium with pathogenic congeners.</title>
        <authorList>
            <person name="Ruby E.G."/>
            <person name="Urbanowski M."/>
            <person name="Campbell J."/>
            <person name="Dunn A."/>
            <person name="Faini M."/>
            <person name="Gunsalus R."/>
            <person name="Lostroh P."/>
            <person name="Lupp C."/>
            <person name="McCann J."/>
            <person name="Millikan D."/>
            <person name="Schaefer A."/>
            <person name="Stabb E."/>
            <person name="Stevens A."/>
            <person name="Visick K."/>
            <person name="Whistler C."/>
            <person name="Greenberg E.P."/>
        </authorList>
    </citation>
    <scope>NUCLEOTIDE SEQUENCE [LARGE SCALE GENOMIC DNA]</scope>
    <source>
        <strain>ATCC 700601 / ES114</strain>
    </source>
</reference>
<accession>Q5E0E9</accession>
<protein>
    <recommendedName>
        <fullName evidence="1">3-deoxy-manno-octulosonate cytidylyltransferase</fullName>
        <ecNumber evidence="1">2.7.7.38</ecNumber>
    </recommendedName>
    <alternativeName>
        <fullName evidence="1">CMP-2-keto-3-deoxyoctulosonic acid synthase</fullName>
        <shortName evidence="1">CKS</shortName>
        <shortName evidence="1">CMP-KDO synthase</shortName>
    </alternativeName>
</protein>
<comment type="function">
    <text evidence="1">Activates KDO (a required 8-carbon sugar) for incorporation into bacterial lipopolysaccharide in Gram-negative bacteria.</text>
</comment>
<comment type="catalytic activity">
    <reaction evidence="1">
        <text>3-deoxy-alpha-D-manno-oct-2-ulosonate + CTP = CMP-3-deoxy-beta-D-manno-octulosonate + diphosphate</text>
        <dbReference type="Rhea" id="RHEA:23448"/>
        <dbReference type="ChEBI" id="CHEBI:33019"/>
        <dbReference type="ChEBI" id="CHEBI:37563"/>
        <dbReference type="ChEBI" id="CHEBI:85986"/>
        <dbReference type="ChEBI" id="CHEBI:85987"/>
        <dbReference type="EC" id="2.7.7.38"/>
    </reaction>
</comment>
<comment type="pathway">
    <text evidence="1">Nucleotide-sugar biosynthesis; CMP-3-deoxy-D-manno-octulosonate biosynthesis; CMP-3-deoxy-D-manno-octulosonate from 3-deoxy-D-manno-octulosonate and CTP: step 1/1.</text>
</comment>
<comment type="pathway">
    <text evidence="1">Bacterial outer membrane biogenesis; lipopolysaccharide biosynthesis.</text>
</comment>
<comment type="subcellular location">
    <subcellularLocation>
        <location evidence="1">Cytoplasm</location>
    </subcellularLocation>
</comment>
<comment type="similarity">
    <text evidence="1">Belongs to the KdsB family.</text>
</comment>
<name>KDSB_ALIF1</name>
<feature type="chain" id="PRO_1000003388" description="3-deoxy-manno-octulosonate cytidylyltransferase">
    <location>
        <begin position="1"/>
        <end position="249"/>
    </location>
</feature>
<proteinExistence type="inferred from homology"/>
<keyword id="KW-0963">Cytoplasm</keyword>
<keyword id="KW-0448">Lipopolysaccharide biosynthesis</keyword>
<keyword id="KW-0548">Nucleotidyltransferase</keyword>
<keyword id="KW-1185">Reference proteome</keyword>
<keyword id="KW-0808">Transferase</keyword>